<dbReference type="EC" id="5.3.1.6" evidence="1"/>
<dbReference type="EMBL" id="CP001139">
    <property type="protein sequence ID" value="ACH65371.1"/>
    <property type="molecule type" value="Genomic_DNA"/>
</dbReference>
<dbReference type="RefSeq" id="WP_005420746.1">
    <property type="nucleotide sequence ID" value="NC_011184.1"/>
</dbReference>
<dbReference type="SMR" id="B5FAI8"/>
<dbReference type="GeneID" id="54164811"/>
<dbReference type="KEGG" id="vfm:VFMJ11_2210"/>
<dbReference type="HOGENOM" id="CLU_056590_1_1_6"/>
<dbReference type="UniPathway" id="UPA00115">
    <property type="reaction ID" value="UER00412"/>
</dbReference>
<dbReference type="Proteomes" id="UP000001857">
    <property type="component" value="Chromosome I"/>
</dbReference>
<dbReference type="GO" id="GO:0005829">
    <property type="term" value="C:cytosol"/>
    <property type="evidence" value="ECO:0007669"/>
    <property type="project" value="TreeGrafter"/>
</dbReference>
<dbReference type="GO" id="GO:0004751">
    <property type="term" value="F:ribose-5-phosphate isomerase activity"/>
    <property type="evidence" value="ECO:0007669"/>
    <property type="project" value="UniProtKB-UniRule"/>
</dbReference>
<dbReference type="GO" id="GO:0006014">
    <property type="term" value="P:D-ribose metabolic process"/>
    <property type="evidence" value="ECO:0007669"/>
    <property type="project" value="TreeGrafter"/>
</dbReference>
<dbReference type="GO" id="GO:0009052">
    <property type="term" value="P:pentose-phosphate shunt, non-oxidative branch"/>
    <property type="evidence" value="ECO:0007669"/>
    <property type="project" value="UniProtKB-UniRule"/>
</dbReference>
<dbReference type="CDD" id="cd01398">
    <property type="entry name" value="RPI_A"/>
    <property type="match status" value="1"/>
</dbReference>
<dbReference type="FunFam" id="3.30.70.260:FF:000004">
    <property type="entry name" value="Ribose-5-phosphate isomerase A"/>
    <property type="match status" value="1"/>
</dbReference>
<dbReference type="FunFam" id="3.40.50.1360:FF:000001">
    <property type="entry name" value="Ribose-5-phosphate isomerase A"/>
    <property type="match status" value="1"/>
</dbReference>
<dbReference type="Gene3D" id="3.30.70.260">
    <property type="match status" value="1"/>
</dbReference>
<dbReference type="Gene3D" id="3.40.50.1360">
    <property type="match status" value="1"/>
</dbReference>
<dbReference type="HAMAP" id="MF_00170">
    <property type="entry name" value="Rib_5P_isom_A"/>
    <property type="match status" value="1"/>
</dbReference>
<dbReference type="InterPro" id="IPR037171">
    <property type="entry name" value="NagB/RpiA_transferase-like"/>
</dbReference>
<dbReference type="InterPro" id="IPR020672">
    <property type="entry name" value="Ribose5P_isomerase_typA_subgr"/>
</dbReference>
<dbReference type="InterPro" id="IPR004788">
    <property type="entry name" value="Ribose5P_isomerase_type_A"/>
</dbReference>
<dbReference type="NCBIfam" id="NF001924">
    <property type="entry name" value="PRK00702.1"/>
    <property type="match status" value="1"/>
</dbReference>
<dbReference type="NCBIfam" id="TIGR00021">
    <property type="entry name" value="rpiA"/>
    <property type="match status" value="1"/>
</dbReference>
<dbReference type="PANTHER" id="PTHR11934">
    <property type="entry name" value="RIBOSE-5-PHOSPHATE ISOMERASE"/>
    <property type="match status" value="1"/>
</dbReference>
<dbReference type="PANTHER" id="PTHR11934:SF0">
    <property type="entry name" value="RIBOSE-5-PHOSPHATE ISOMERASE"/>
    <property type="match status" value="1"/>
</dbReference>
<dbReference type="Pfam" id="PF06026">
    <property type="entry name" value="Rib_5-P_isom_A"/>
    <property type="match status" value="1"/>
</dbReference>
<dbReference type="SUPFAM" id="SSF75445">
    <property type="entry name" value="D-ribose-5-phosphate isomerase (RpiA), lid domain"/>
    <property type="match status" value="1"/>
</dbReference>
<dbReference type="SUPFAM" id="SSF100950">
    <property type="entry name" value="NagB/RpiA/CoA transferase-like"/>
    <property type="match status" value="1"/>
</dbReference>
<feature type="chain" id="PRO_1000097704" description="Ribose-5-phosphate isomerase A">
    <location>
        <begin position="1"/>
        <end position="218"/>
    </location>
</feature>
<feature type="active site" description="Proton acceptor" evidence="1">
    <location>
        <position position="103"/>
    </location>
</feature>
<feature type="binding site" evidence="1">
    <location>
        <begin position="28"/>
        <end position="31"/>
    </location>
    <ligand>
        <name>substrate</name>
    </ligand>
</feature>
<feature type="binding site" evidence="1">
    <location>
        <begin position="81"/>
        <end position="84"/>
    </location>
    <ligand>
        <name>substrate</name>
    </ligand>
</feature>
<feature type="binding site" evidence="1">
    <location>
        <begin position="94"/>
        <end position="97"/>
    </location>
    <ligand>
        <name>substrate</name>
    </ligand>
</feature>
<feature type="binding site" evidence="1">
    <location>
        <position position="121"/>
    </location>
    <ligand>
        <name>substrate</name>
    </ligand>
</feature>
<reference key="1">
    <citation type="submission" date="2008-08" db="EMBL/GenBank/DDBJ databases">
        <title>Complete sequence of Vibrio fischeri strain MJ11.</title>
        <authorList>
            <person name="Mandel M.J."/>
            <person name="Stabb E.V."/>
            <person name="Ruby E.G."/>
            <person name="Ferriera S."/>
            <person name="Johnson J."/>
            <person name="Kravitz S."/>
            <person name="Beeson K."/>
            <person name="Sutton G."/>
            <person name="Rogers Y.-H."/>
            <person name="Friedman R."/>
            <person name="Frazier M."/>
            <person name="Venter J.C."/>
        </authorList>
    </citation>
    <scope>NUCLEOTIDE SEQUENCE [LARGE SCALE GENOMIC DNA]</scope>
    <source>
        <strain>MJ11</strain>
    </source>
</reference>
<comment type="function">
    <text evidence="1">Catalyzes the reversible conversion of ribose-5-phosphate to ribulose 5-phosphate.</text>
</comment>
<comment type="catalytic activity">
    <reaction evidence="1">
        <text>aldehydo-D-ribose 5-phosphate = D-ribulose 5-phosphate</text>
        <dbReference type="Rhea" id="RHEA:14657"/>
        <dbReference type="ChEBI" id="CHEBI:58121"/>
        <dbReference type="ChEBI" id="CHEBI:58273"/>
        <dbReference type="EC" id="5.3.1.6"/>
    </reaction>
</comment>
<comment type="pathway">
    <text evidence="1">Carbohydrate degradation; pentose phosphate pathway; D-ribose 5-phosphate from D-ribulose 5-phosphate (non-oxidative stage): step 1/1.</text>
</comment>
<comment type="subunit">
    <text evidence="1">Homodimer.</text>
</comment>
<comment type="similarity">
    <text evidence="1">Belongs to the ribose 5-phosphate isomerase family.</text>
</comment>
<evidence type="ECO:0000255" key="1">
    <source>
        <dbReference type="HAMAP-Rule" id="MF_00170"/>
    </source>
</evidence>
<organism>
    <name type="scientific">Aliivibrio fischeri (strain MJ11)</name>
    <name type="common">Vibrio fischeri</name>
    <dbReference type="NCBI Taxonomy" id="388396"/>
    <lineage>
        <taxon>Bacteria</taxon>
        <taxon>Pseudomonadati</taxon>
        <taxon>Pseudomonadota</taxon>
        <taxon>Gammaproteobacteria</taxon>
        <taxon>Vibrionales</taxon>
        <taxon>Vibrionaceae</taxon>
        <taxon>Aliivibrio</taxon>
    </lineage>
</organism>
<gene>
    <name evidence="1" type="primary">rpiA</name>
    <name type="ordered locus">VFMJ11_2210</name>
</gene>
<keyword id="KW-0413">Isomerase</keyword>
<accession>B5FAI8</accession>
<protein>
    <recommendedName>
        <fullName evidence="1">Ribose-5-phosphate isomerase A</fullName>
        <ecNumber evidence="1">5.3.1.6</ecNumber>
    </recommendedName>
    <alternativeName>
        <fullName evidence="1">Phosphoriboisomerase A</fullName>
        <shortName evidence="1">PRI</shortName>
    </alternativeName>
</protein>
<name>RPIA_ALIFM</name>
<sequence>MTQDEMKKAAGWAALEYVEAGSIVGVGTGSTVNHFIDALATMKNEIKGAVSSSVASTEKLKELGIEVFDCNDVAGLDVYVDGADEINGKNEMIKGGGAALTREKIVAAISDKFICIVDDTKQVDVLGQFPLPVEVIPMARSYVARELVKLGGDPAYREGVITDNGNVILDVHGMKITDAKDLEDKINALPGVVTVGLFAHRGADVLLVGAPEGVKKFD</sequence>
<proteinExistence type="inferred from homology"/>